<protein>
    <recommendedName>
        <fullName>Putative uncharacterized protein YNL266W</fullName>
    </recommendedName>
</protein>
<sequence>MWLINHTYKLLSYFLRKASNRFFNSSSSSFSCSFLVFLFVVFFSDCFFSITSFLISFGILSSFLIFSLFCLGFLTVIGCLASALSLSSLSKAKIGFSSSLSSISPEGSLKSEEMLEDDEDKEFSSLLYGTSYVFAISFK</sequence>
<proteinExistence type="uncertain"/>
<name>YN06_YEAST</name>
<reference key="1">
    <citation type="journal article" date="1996" name="Yeast">
        <title>The sequence of a 24,152 bp segment from the left arm of chromosome XIV from Saccharomyces cerevisiae between the BNI1 and the POL2 genes.</title>
        <authorList>
            <person name="Sen-Gupta M."/>
            <person name="Lyck R."/>
            <person name="Fleig U."/>
            <person name="Niedenthal R.K."/>
            <person name="Hegemann J.H."/>
        </authorList>
    </citation>
    <scope>NUCLEOTIDE SEQUENCE [GENOMIC DNA]</scope>
    <source>
        <strain>ATCC 96604 / S288c / FY1679</strain>
    </source>
</reference>
<reference key="2">
    <citation type="journal article" date="1997" name="Nature">
        <title>The nucleotide sequence of Saccharomyces cerevisiae chromosome XIV and its evolutionary implications.</title>
        <authorList>
            <person name="Philippsen P."/>
            <person name="Kleine K."/>
            <person name="Poehlmann R."/>
            <person name="Duesterhoeft A."/>
            <person name="Hamberg K."/>
            <person name="Hegemann J.H."/>
            <person name="Obermaier B."/>
            <person name="Urrestarazu L.A."/>
            <person name="Aert R."/>
            <person name="Albermann K."/>
            <person name="Altmann R."/>
            <person name="Andre B."/>
            <person name="Baladron V."/>
            <person name="Ballesta J.P.G."/>
            <person name="Becam A.-M."/>
            <person name="Beinhauer J.D."/>
            <person name="Boskovic J."/>
            <person name="Buitrago M.J."/>
            <person name="Bussereau F."/>
            <person name="Coster F."/>
            <person name="Crouzet M."/>
            <person name="D'Angelo M."/>
            <person name="Dal Pero F."/>
            <person name="De Antoni A."/>
            <person name="del Rey F."/>
            <person name="Doignon F."/>
            <person name="Domdey H."/>
            <person name="Dubois E."/>
            <person name="Fiedler T.A."/>
            <person name="Fleig U."/>
            <person name="Floeth M."/>
            <person name="Fritz C."/>
            <person name="Gaillardin C."/>
            <person name="Garcia-Cantalejo J.M."/>
            <person name="Glansdorff N."/>
            <person name="Goffeau A."/>
            <person name="Gueldener U."/>
            <person name="Herbert C.J."/>
            <person name="Heumann K."/>
            <person name="Heuss-Neitzel D."/>
            <person name="Hilbert H."/>
            <person name="Hinni K."/>
            <person name="Iraqui Houssaini I."/>
            <person name="Jacquet M."/>
            <person name="Jimenez A."/>
            <person name="Jonniaux J.-L."/>
            <person name="Karpfinger-Hartl L."/>
            <person name="Lanfranchi G."/>
            <person name="Lepingle A."/>
            <person name="Levesque H."/>
            <person name="Lyck R."/>
            <person name="Maftahi M."/>
            <person name="Mallet L."/>
            <person name="Maurer C.T.C."/>
            <person name="Messenguy F."/>
            <person name="Mewes H.-W."/>
            <person name="Moestl D."/>
            <person name="Nasr F."/>
            <person name="Nicaud J.-M."/>
            <person name="Niedenthal R.K."/>
            <person name="Pandolfo D."/>
            <person name="Pierard A."/>
            <person name="Piravandi E."/>
            <person name="Planta R.J."/>
            <person name="Pohl T.M."/>
            <person name="Purnelle B."/>
            <person name="Rebischung C."/>
            <person name="Remacha M.A."/>
            <person name="Revuelta J.L."/>
            <person name="Rinke M."/>
            <person name="Saiz J.E."/>
            <person name="Sartorello F."/>
            <person name="Scherens B."/>
            <person name="Sen-Gupta M."/>
            <person name="Soler-Mira A."/>
            <person name="Urbanus J.H.M."/>
            <person name="Valle G."/>
            <person name="Van Dyck L."/>
            <person name="Verhasselt P."/>
            <person name="Vierendeels F."/>
            <person name="Vissers S."/>
            <person name="Voet M."/>
            <person name="Volckaert G."/>
            <person name="Wach A."/>
            <person name="Wambutt R."/>
            <person name="Wedler H."/>
            <person name="Zollner A."/>
            <person name="Hani J."/>
        </authorList>
    </citation>
    <scope>NUCLEOTIDE SEQUENCE [LARGE SCALE GENOMIC DNA]</scope>
    <source>
        <strain>ATCC 204508 / S288c</strain>
    </source>
</reference>
<reference key="3">
    <citation type="journal article" date="2014" name="G3 (Bethesda)">
        <title>The reference genome sequence of Saccharomyces cerevisiae: Then and now.</title>
        <authorList>
            <person name="Engel S.R."/>
            <person name="Dietrich F.S."/>
            <person name="Fisk D.G."/>
            <person name="Binkley G."/>
            <person name="Balakrishnan R."/>
            <person name="Costanzo M.C."/>
            <person name="Dwight S.S."/>
            <person name="Hitz B.C."/>
            <person name="Karra K."/>
            <person name="Nash R.S."/>
            <person name="Weng S."/>
            <person name="Wong E.D."/>
            <person name="Lloyd P."/>
            <person name="Skrzypek M.S."/>
            <person name="Miyasato S.R."/>
            <person name="Simison M."/>
            <person name="Cherry J.M."/>
        </authorList>
    </citation>
    <scope>GENOME REANNOTATION</scope>
    <source>
        <strain>ATCC 204508 / S288c</strain>
    </source>
</reference>
<accession>P53842</accession>
<feature type="chain" id="PRO_0000203380" description="Putative uncharacterized protein YNL266W">
    <location>
        <begin position="1"/>
        <end position="139"/>
    </location>
</feature>
<feature type="transmembrane region" description="Helical" evidence="1">
    <location>
        <begin position="35"/>
        <end position="55"/>
    </location>
</feature>
<feature type="transmembrane region" description="Helical" evidence="1">
    <location>
        <begin position="57"/>
        <end position="77"/>
    </location>
</feature>
<organism>
    <name type="scientific">Saccharomyces cerevisiae (strain ATCC 204508 / S288c)</name>
    <name type="common">Baker's yeast</name>
    <dbReference type="NCBI Taxonomy" id="559292"/>
    <lineage>
        <taxon>Eukaryota</taxon>
        <taxon>Fungi</taxon>
        <taxon>Dikarya</taxon>
        <taxon>Ascomycota</taxon>
        <taxon>Saccharomycotina</taxon>
        <taxon>Saccharomycetes</taxon>
        <taxon>Saccharomycetales</taxon>
        <taxon>Saccharomycetaceae</taxon>
        <taxon>Saccharomyces</taxon>
    </lineage>
</organism>
<keyword id="KW-0472">Membrane</keyword>
<keyword id="KW-0812">Transmembrane</keyword>
<keyword id="KW-1133">Transmembrane helix</keyword>
<dbReference type="EMBL" id="X92494">
    <property type="protein sequence ID" value="CAA63232.1"/>
    <property type="molecule type" value="Genomic_DNA"/>
</dbReference>
<dbReference type="EMBL" id="Z71542">
    <property type="protein sequence ID" value="CAA96173.1"/>
    <property type="molecule type" value="Genomic_DNA"/>
</dbReference>
<dbReference type="PIR" id="S60916">
    <property type="entry name" value="S60916"/>
</dbReference>
<dbReference type="DIP" id="DIP-4208N"/>
<dbReference type="IntAct" id="P53842">
    <property type="interactions" value="1"/>
</dbReference>
<dbReference type="STRING" id="4932.YNL266W"/>
<dbReference type="PaxDb" id="4932-YNL266W"/>
<dbReference type="EnsemblFungi" id="YNL266W_mRNA">
    <property type="protein sequence ID" value="YNL266W"/>
    <property type="gene ID" value="YNL266W"/>
</dbReference>
<dbReference type="AGR" id="SGD:S000005210"/>
<dbReference type="SGD" id="S000005210">
    <property type="gene designation" value="YNL266W"/>
</dbReference>
<dbReference type="HOGENOM" id="CLU_1846697_0_0_1"/>
<dbReference type="GO" id="GO:0016020">
    <property type="term" value="C:membrane"/>
    <property type="evidence" value="ECO:0007669"/>
    <property type="project" value="UniProtKB-SubCell"/>
</dbReference>
<gene>
    <name type="ordered locus">YNL266W</name>
    <name type="ORF">N0800</name>
</gene>
<evidence type="ECO:0000255" key="1"/>
<evidence type="ECO:0000305" key="2"/>
<evidence type="ECO:0000305" key="3">
    <source>
    </source>
</evidence>
<comment type="subcellular location">
    <subcellularLocation>
        <location evidence="2">Membrane</location>
        <topology evidence="2">Multi-pass membrane protein</topology>
    </subcellularLocation>
</comment>
<comment type="miscellaneous">
    <text evidence="2">Partially overlaps IST1.</text>
</comment>
<comment type="caution">
    <text evidence="3">Product of a dubious gene prediction unlikely to encode a functional protein. Because of that it is not part of the S.cerevisiae S288c complete/reference proteome set.</text>
</comment>